<name>PIG14_CLAP2</name>
<feature type="chain" id="PRO_0000443985" description="Atrochrysone carboxyl ACP thioesterase CPUR_05436">
    <location>
        <begin position="1"/>
        <end position="310"/>
    </location>
</feature>
<feature type="active site" description="Proton donor/acceptor" evidence="4">
    <location>
        <position position="109"/>
    </location>
</feature>
<feature type="binding site" evidence="3">
    <location>
        <position position="105"/>
    </location>
    <ligand>
        <name>Zn(2+)</name>
        <dbReference type="ChEBI" id="CHEBI:29105"/>
        <label>1</label>
        <note>catalytic</note>
    </ligand>
</feature>
<feature type="binding site" evidence="3">
    <location>
        <position position="107"/>
    </location>
    <ligand>
        <name>Zn(2+)</name>
        <dbReference type="ChEBI" id="CHEBI:29105"/>
        <label>1</label>
        <note>catalytic</note>
    </ligand>
</feature>
<feature type="binding site" evidence="3">
    <location>
        <position position="109"/>
    </location>
    <ligand>
        <name>Zn(2+)</name>
        <dbReference type="ChEBI" id="CHEBI:29105"/>
        <label>2</label>
        <note>catalytic</note>
    </ligand>
</feature>
<feature type="binding site" evidence="3">
    <location>
        <position position="110"/>
    </location>
    <ligand>
        <name>Zn(2+)</name>
        <dbReference type="ChEBI" id="CHEBI:29105"/>
        <label>2</label>
        <note>catalytic</note>
    </ligand>
</feature>
<gene>
    <name type="ORF">CPUR_05436</name>
</gene>
<comment type="function">
    <text evidence="1 2 5 6">Atrochrysone carboxyl ACP thioesterase; part of the ergochrome gene cluster responsible for the typical purple-black color of the ergot sclerotia (PubMed:28955461). The ergochrome gene cluster produces several ergot pigments including the yellow ergochrome secalonic acid and its derivatives, as well as the red anthraquinones endocrocin and clavorubin (PubMed:28955461). The pathway begins with the synthesis of atrochrysone thioester by the polyketide synthase (PKS) CPUR_05437 (By similarity). The atrochrysone carboxyl ACP thioesterase CPUR_05436 then breaks the thioester bond and releases the atrochrysone carboxylic acid from CPUR_05437 (By similarity). The atrochrysone carboxylic acid is then converted to atrochrysone which is further transformed into emodin anthrone (By similarity). The next step is performed by the anthrone oxygenase CPUR_05434 that catalyzes the oxidation of emodinanthrone to emodin (By similarity). Emodin is further modified to yield monodictyphenone via several steps involving CPUR_05427, CPUR_05428, CPUR_05429 and CPUR_05430 (By similarity). The short chain dehydrogenase/reductase CPUR_05418 then catalyzes the C-5 ketoreduction to give the xanthone skeleton of the monomeric units (PubMed:32105084). Ergochromes formation requires further dimerization steps of different xanthone units, probably catalyzed by the cytochrome P450 monooxygenase CPUR_05419 (PubMed:28955461). CPUR_05425, CPUR_05426 and CPUR_05431 are unique to Claviceps, thus it is likely that they are involved in further modification of xanthone units or in their dimerization (PubMed:28955461). The yellow ergochromes and the red anthraquinone pigments endocrocin and clavorubin are products from the same PKS derived precursors and the latter are likely shunt products in the pathway of xanthone biosynthesis (PubMed:28955461). It is proposed that atrochrysone carboxylic acid released from the PKS CPUR_05437 can also be converted to endocrocin anthrone which is further oxidized into endocrocin by CPUR_05435 (By similarity). Endocrocin could be then modified to clavorubin, possibly by CPUR_05423 and CPUR_05431 (PubMed:28955461). Clavorubin is the principal anthraquinone metabolite produced by the cluster with a much higher yield compared to endocrocin (PubMed:28955461).</text>
</comment>
<comment type="catalytic activity">
    <reaction evidence="9">
        <text>atrochrysone carboxyl-[ACP] + H2O = atrochrysone carboxylate + holo-[ACP] + H(+)</text>
        <dbReference type="Rhea" id="RHEA:64236"/>
        <dbReference type="Rhea" id="RHEA-COMP:9685"/>
        <dbReference type="Rhea" id="RHEA-COMP:16552"/>
        <dbReference type="ChEBI" id="CHEBI:15377"/>
        <dbReference type="ChEBI" id="CHEBI:15378"/>
        <dbReference type="ChEBI" id="CHEBI:64479"/>
        <dbReference type="ChEBI" id="CHEBI:149712"/>
        <dbReference type="ChEBI" id="CHEBI:149713"/>
    </reaction>
    <physiologicalReaction direction="left-to-right" evidence="9">
        <dbReference type="Rhea" id="RHEA:64237"/>
    </physiologicalReaction>
</comment>
<comment type="cofactor">
    <cofactor evidence="3">
        <name>Zn(2+)</name>
        <dbReference type="ChEBI" id="CHEBI:29105"/>
    </cofactor>
    <text evidence="3">Binds 2 Zn(2+) ions per subunit.</text>
</comment>
<comment type="pathway">
    <text evidence="9">Pigment biosynthesis.</text>
</comment>
<comment type="induction">
    <text evidence="5">Expression starts 10 days after infection and shows an increase towards the late stages of infection which correlates with the formation of the sclerotia and thus the pigment production (PubMed:28955461). Is directly regulated by the cluster-specific activator CPUR_05433 (PubMed:28955461).</text>
</comment>
<comment type="similarity">
    <text evidence="8">Belongs to the metallo-beta-lactamase superfamily.</text>
</comment>
<organism>
    <name type="scientific">Claviceps purpurea (strain 20.1)</name>
    <name type="common">Ergot fungus</name>
    <name type="synonym">Sphacelia segetum</name>
    <dbReference type="NCBI Taxonomy" id="1111077"/>
    <lineage>
        <taxon>Eukaryota</taxon>
        <taxon>Fungi</taxon>
        <taxon>Dikarya</taxon>
        <taxon>Ascomycota</taxon>
        <taxon>Pezizomycotina</taxon>
        <taxon>Sordariomycetes</taxon>
        <taxon>Hypocreomycetidae</taxon>
        <taxon>Hypocreales</taxon>
        <taxon>Clavicipitaceae</taxon>
        <taxon>Claviceps</taxon>
    </lineage>
</organism>
<protein>
    <recommendedName>
        <fullName evidence="7">Atrochrysone carboxyl ACP thioesterase CPUR_05436</fullName>
        <ecNumber evidence="9">3.1.2.-</ecNumber>
    </recommendedName>
    <alternativeName>
        <fullName evidence="7">Ergochrome gene cluster protein CPUR_05436</fullName>
    </alternativeName>
</protein>
<dbReference type="EC" id="3.1.2.-" evidence="9"/>
<dbReference type="EMBL" id="CAGA01000032">
    <property type="protein sequence ID" value="CCE31583.1"/>
    <property type="molecule type" value="Genomic_DNA"/>
</dbReference>
<dbReference type="SMR" id="M1WCF7"/>
<dbReference type="STRING" id="1111077.M1WCF7"/>
<dbReference type="VEuPathDB" id="FungiDB:CPUR_05436"/>
<dbReference type="eggNOG" id="KOG0813">
    <property type="taxonomic scope" value="Eukaryota"/>
</dbReference>
<dbReference type="HOGENOM" id="CLU_048478_1_0_1"/>
<dbReference type="OrthoDB" id="17458at2759"/>
<dbReference type="PhylomeDB" id="M1WCF7"/>
<dbReference type="Proteomes" id="UP000016801">
    <property type="component" value="Unassembled WGS sequence"/>
</dbReference>
<dbReference type="GO" id="GO:0016787">
    <property type="term" value="F:hydrolase activity"/>
    <property type="evidence" value="ECO:0007669"/>
    <property type="project" value="UniProtKB-KW"/>
</dbReference>
<dbReference type="GO" id="GO:0046872">
    <property type="term" value="F:metal ion binding"/>
    <property type="evidence" value="ECO:0007669"/>
    <property type="project" value="UniProtKB-KW"/>
</dbReference>
<dbReference type="GO" id="GO:0044550">
    <property type="term" value="P:secondary metabolite biosynthetic process"/>
    <property type="evidence" value="ECO:0007669"/>
    <property type="project" value="TreeGrafter"/>
</dbReference>
<dbReference type="CDD" id="cd07722">
    <property type="entry name" value="LACTB2-like_MBL-fold"/>
    <property type="match status" value="1"/>
</dbReference>
<dbReference type="FunFam" id="3.60.15.10:FF:000041">
    <property type="entry name" value="Metallo-beta-lactamase domain protein"/>
    <property type="match status" value="1"/>
</dbReference>
<dbReference type="Gene3D" id="3.60.15.10">
    <property type="entry name" value="Ribonuclease Z/Hydroxyacylglutathione hydrolase-like"/>
    <property type="match status" value="1"/>
</dbReference>
<dbReference type="Gene3D" id="1.10.10.10">
    <property type="entry name" value="Winged helix-like DNA-binding domain superfamily/Winged helix DNA-binding domain"/>
    <property type="match status" value="1"/>
</dbReference>
<dbReference type="InterPro" id="IPR047921">
    <property type="entry name" value="LACTB2-like_MBL-fold"/>
</dbReference>
<dbReference type="InterPro" id="IPR001279">
    <property type="entry name" value="Metallo-B-lactamas"/>
</dbReference>
<dbReference type="InterPro" id="IPR036866">
    <property type="entry name" value="RibonucZ/Hydroxyglut_hydro"/>
</dbReference>
<dbReference type="InterPro" id="IPR050662">
    <property type="entry name" value="Sec-metab_biosynth-thioest"/>
</dbReference>
<dbReference type="InterPro" id="IPR036388">
    <property type="entry name" value="WH-like_DNA-bd_sf"/>
</dbReference>
<dbReference type="PANTHER" id="PTHR23131:SF3">
    <property type="entry name" value="ATROCHRYSONE CARBOXYL ACP THIOESTERASE"/>
    <property type="match status" value="1"/>
</dbReference>
<dbReference type="PANTHER" id="PTHR23131">
    <property type="entry name" value="ENDORIBONUCLEASE LACTB2"/>
    <property type="match status" value="1"/>
</dbReference>
<dbReference type="Pfam" id="PF00753">
    <property type="entry name" value="Lactamase_B"/>
    <property type="match status" value="1"/>
</dbReference>
<dbReference type="SMART" id="SM00849">
    <property type="entry name" value="Lactamase_B"/>
    <property type="match status" value="1"/>
</dbReference>
<dbReference type="SUPFAM" id="SSF56281">
    <property type="entry name" value="Metallo-hydrolase/oxidoreductase"/>
    <property type="match status" value="1"/>
</dbReference>
<sequence>MAGDKGGYRQINSSLNICAFEDYLKSQTDNLPELPDVEQITPRVLRVLGQNPGKFTYQGTNTYIVGTGKHRLIVDTSGGEIEWAELLESTLSSLNISLSHVLLTHWHGDHTGGVPDLLRIYPHLEHDIYKNEPESGQQDIVDGQIFRVEGATVRALHVPGHSDDHMCFILEEEQAMFTGDNILGHGTSAVEDLGTFMASMQRMLDQRCLTGYSAHGAVIADLPGKIRTELANKRRREKQILLALGRVRQRRQKSITVEDLVTEIYGESMDESTRTLALTPFTDEVLRKLAGDFKVAFEVRAGKRRWYSVE</sequence>
<accession>M1WCF7</accession>
<keyword id="KW-0378">Hydrolase</keyword>
<keyword id="KW-0479">Metal-binding</keyword>
<keyword id="KW-1185">Reference proteome</keyword>
<keyword id="KW-0862">Zinc</keyword>
<reference key="1">
    <citation type="journal article" date="2013" name="PLoS Genet.">
        <title>Plant-symbiotic fungi as chemical engineers: Multi-genome analysis of the Clavicipitaceae reveals dynamics of alkaloid loci.</title>
        <authorList>
            <person name="Schardl C.L."/>
            <person name="Young C.A."/>
            <person name="Hesse U."/>
            <person name="Amyotte S.G."/>
            <person name="Andreeva K."/>
            <person name="Calie P.J."/>
            <person name="Fleetwood D.J."/>
            <person name="Haws D.C."/>
            <person name="Moore N."/>
            <person name="Oeser B."/>
            <person name="Panaccione D.G."/>
            <person name="Schweri K.K."/>
            <person name="Voisey C.R."/>
            <person name="Farman M.L."/>
            <person name="Jaromczyk J.W."/>
            <person name="Roe B.A."/>
            <person name="O'Sullivan D.M."/>
            <person name="Scott B."/>
            <person name="Tudzynski P."/>
            <person name="An Z."/>
            <person name="Arnaoudova E.G."/>
            <person name="Bullock C.T."/>
            <person name="Charlton N.D."/>
            <person name="Chen L."/>
            <person name="Cox M."/>
            <person name="Dinkins R.D."/>
            <person name="Florea S."/>
            <person name="Glenn A.E."/>
            <person name="Gordon A."/>
            <person name="Gueldener U."/>
            <person name="Harris D.R."/>
            <person name="Hollin W."/>
            <person name="Jaromczyk J."/>
            <person name="Johnson R.D."/>
            <person name="Khan A.K."/>
            <person name="Leistner E."/>
            <person name="Leuchtmann A."/>
            <person name="Li C."/>
            <person name="Liu J."/>
            <person name="Liu J."/>
            <person name="Liu M."/>
            <person name="Mace W."/>
            <person name="Machado C."/>
            <person name="Nagabhyru P."/>
            <person name="Pan J."/>
            <person name="Schmid J."/>
            <person name="Sugawara K."/>
            <person name="Steiner U."/>
            <person name="Takach J.E."/>
            <person name="Tanaka E."/>
            <person name="Webb J.S."/>
            <person name="Wilson E.V."/>
            <person name="Wiseman J.L."/>
            <person name="Yoshida R."/>
            <person name="Zeng Z."/>
        </authorList>
    </citation>
    <scope>NUCLEOTIDE SEQUENCE [LARGE SCALE GENOMIC DNA]</scope>
    <source>
        <strain>20.1</strain>
    </source>
</reference>
<reference key="2">
    <citation type="journal article" date="2016" name="Fungal Biol. Biotechnol.">
        <title>Identification and characterization of the ergochrome gene cluster in the plant pathogenic fungus Claviceps purpurea.</title>
        <authorList>
            <person name="Neubauer L."/>
            <person name="Dopstadt J."/>
            <person name="Humpf H.U."/>
            <person name="Tudzynski P."/>
        </authorList>
    </citation>
    <scope>FUNCTION</scope>
    <scope>INDUCTION</scope>
</reference>
<reference key="3">
    <citation type="journal article" date="2020" name="Org. Lett.">
        <title>Unraveling the fungal strategy for tetrahydroxanthone biosynthesis and diversification.</title>
        <authorList>
            <person name="Wei X."/>
            <person name="Matsuda Y."/>
        </authorList>
    </citation>
    <scope>FUNCTION</scope>
</reference>
<proteinExistence type="evidence at transcript level"/>
<evidence type="ECO:0000250" key="1">
    <source>
        <dbReference type="UniProtKB" id="Q4W945"/>
    </source>
</evidence>
<evidence type="ECO:0000250" key="2">
    <source>
        <dbReference type="UniProtKB" id="Q5BH30"/>
    </source>
</evidence>
<evidence type="ECO:0000250" key="3">
    <source>
        <dbReference type="UniProtKB" id="Q988B9"/>
    </source>
</evidence>
<evidence type="ECO:0000255" key="4"/>
<evidence type="ECO:0000269" key="5">
    <source>
    </source>
</evidence>
<evidence type="ECO:0000269" key="6">
    <source>
    </source>
</evidence>
<evidence type="ECO:0000303" key="7">
    <source>
    </source>
</evidence>
<evidence type="ECO:0000305" key="8"/>
<evidence type="ECO:0000305" key="9">
    <source>
    </source>
</evidence>